<evidence type="ECO:0000255" key="1">
    <source>
        <dbReference type="HAMAP-Rule" id="MF_01367"/>
    </source>
</evidence>
<evidence type="ECO:0000305" key="2"/>
<sequence length="122" mass="13464">MIQQETRLRVGDNTGAKELLCIRVLGGSYRRYASVGDIIVASVKEATPGGVVKKGDVVKAVVVRTRKPIKRPDGSYIRFSENAAVIINEQKNPKGTRIFGPVARELRDRDFMKIISLAPEVL</sequence>
<reference key="1">
    <citation type="journal article" date="2008" name="J. Bacteriol.">
        <title>The genome of Heliobacterium modesticaldum, a phototrophic representative of the Firmicutes containing the simplest photosynthetic apparatus.</title>
        <authorList>
            <person name="Sattley W.M."/>
            <person name="Madigan M.T."/>
            <person name="Swingley W.D."/>
            <person name="Cheung P.C."/>
            <person name="Clocksin K.M."/>
            <person name="Conrad A.L."/>
            <person name="Dejesa L.C."/>
            <person name="Honchak B.M."/>
            <person name="Jung D.O."/>
            <person name="Karbach L.E."/>
            <person name="Kurdoglu A."/>
            <person name="Lahiri S."/>
            <person name="Mastrian S.D."/>
            <person name="Page L.E."/>
            <person name="Taylor H.L."/>
            <person name="Wang Z.T."/>
            <person name="Raymond J."/>
            <person name="Chen M."/>
            <person name="Blankenship R.E."/>
            <person name="Touchman J.W."/>
        </authorList>
    </citation>
    <scope>NUCLEOTIDE SEQUENCE [LARGE SCALE GENOMIC DNA]</scope>
    <source>
        <strain>ATCC 51547 / Ice1</strain>
    </source>
</reference>
<comment type="function">
    <text evidence="1">Binds to 23S rRNA. Forms part of two intersubunit bridges in the 70S ribosome.</text>
</comment>
<comment type="subunit">
    <text evidence="1">Part of the 50S ribosomal subunit. Forms a cluster with proteins L3 and L19. In the 70S ribosome, L14 and L19 interact and together make contacts with the 16S rRNA in bridges B5 and B8.</text>
</comment>
<comment type="similarity">
    <text evidence="1">Belongs to the universal ribosomal protein uL14 family.</text>
</comment>
<protein>
    <recommendedName>
        <fullName evidence="1">Large ribosomal subunit protein uL14</fullName>
    </recommendedName>
    <alternativeName>
        <fullName evidence="2">50S ribosomal protein L14</fullName>
    </alternativeName>
</protein>
<dbReference type="EMBL" id="CP000930">
    <property type="protein sequence ID" value="ABZ83965.1"/>
    <property type="molecule type" value="Genomic_DNA"/>
</dbReference>
<dbReference type="RefSeq" id="WP_012282481.1">
    <property type="nucleotide sequence ID" value="NC_010337.2"/>
</dbReference>
<dbReference type="SMR" id="B0TC66"/>
<dbReference type="STRING" id="498761.HM1_1388"/>
<dbReference type="KEGG" id="hmo:HM1_1388"/>
<dbReference type="eggNOG" id="COG0093">
    <property type="taxonomic scope" value="Bacteria"/>
</dbReference>
<dbReference type="HOGENOM" id="CLU_095071_2_1_9"/>
<dbReference type="OrthoDB" id="9806379at2"/>
<dbReference type="Proteomes" id="UP000008550">
    <property type="component" value="Chromosome"/>
</dbReference>
<dbReference type="GO" id="GO:0022625">
    <property type="term" value="C:cytosolic large ribosomal subunit"/>
    <property type="evidence" value="ECO:0007669"/>
    <property type="project" value="TreeGrafter"/>
</dbReference>
<dbReference type="GO" id="GO:0070180">
    <property type="term" value="F:large ribosomal subunit rRNA binding"/>
    <property type="evidence" value="ECO:0007669"/>
    <property type="project" value="TreeGrafter"/>
</dbReference>
<dbReference type="GO" id="GO:0003735">
    <property type="term" value="F:structural constituent of ribosome"/>
    <property type="evidence" value="ECO:0007669"/>
    <property type="project" value="InterPro"/>
</dbReference>
<dbReference type="GO" id="GO:0006412">
    <property type="term" value="P:translation"/>
    <property type="evidence" value="ECO:0007669"/>
    <property type="project" value="UniProtKB-UniRule"/>
</dbReference>
<dbReference type="CDD" id="cd00337">
    <property type="entry name" value="Ribosomal_uL14"/>
    <property type="match status" value="1"/>
</dbReference>
<dbReference type="FunFam" id="2.40.150.20:FF:000001">
    <property type="entry name" value="50S ribosomal protein L14"/>
    <property type="match status" value="1"/>
</dbReference>
<dbReference type="Gene3D" id="2.40.150.20">
    <property type="entry name" value="Ribosomal protein L14"/>
    <property type="match status" value="1"/>
</dbReference>
<dbReference type="HAMAP" id="MF_01367">
    <property type="entry name" value="Ribosomal_uL14"/>
    <property type="match status" value="1"/>
</dbReference>
<dbReference type="InterPro" id="IPR000218">
    <property type="entry name" value="Ribosomal_uL14"/>
</dbReference>
<dbReference type="InterPro" id="IPR005745">
    <property type="entry name" value="Ribosomal_uL14_bac-type"/>
</dbReference>
<dbReference type="InterPro" id="IPR019972">
    <property type="entry name" value="Ribosomal_uL14_CS"/>
</dbReference>
<dbReference type="InterPro" id="IPR036853">
    <property type="entry name" value="Ribosomal_uL14_sf"/>
</dbReference>
<dbReference type="NCBIfam" id="TIGR01067">
    <property type="entry name" value="rplN_bact"/>
    <property type="match status" value="1"/>
</dbReference>
<dbReference type="PANTHER" id="PTHR11761">
    <property type="entry name" value="50S/60S RIBOSOMAL PROTEIN L14/L23"/>
    <property type="match status" value="1"/>
</dbReference>
<dbReference type="PANTHER" id="PTHR11761:SF3">
    <property type="entry name" value="LARGE RIBOSOMAL SUBUNIT PROTEIN UL14M"/>
    <property type="match status" value="1"/>
</dbReference>
<dbReference type="Pfam" id="PF00238">
    <property type="entry name" value="Ribosomal_L14"/>
    <property type="match status" value="1"/>
</dbReference>
<dbReference type="SMART" id="SM01374">
    <property type="entry name" value="Ribosomal_L14"/>
    <property type="match status" value="1"/>
</dbReference>
<dbReference type="SUPFAM" id="SSF50193">
    <property type="entry name" value="Ribosomal protein L14"/>
    <property type="match status" value="1"/>
</dbReference>
<dbReference type="PROSITE" id="PS00049">
    <property type="entry name" value="RIBOSOMAL_L14"/>
    <property type="match status" value="1"/>
</dbReference>
<proteinExistence type="inferred from homology"/>
<organism>
    <name type="scientific">Heliobacterium modesticaldum (strain ATCC 51547 / Ice1)</name>
    <dbReference type="NCBI Taxonomy" id="498761"/>
    <lineage>
        <taxon>Bacteria</taxon>
        <taxon>Bacillati</taxon>
        <taxon>Bacillota</taxon>
        <taxon>Clostridia</taxon>
        <taxon>Eubacteriales</taxon>
        <taxon>Heliobacteriaceae</taxon>
        <taxon>Heliomicrobium</taxon>
    </lineage>
</organism>
<feature type="chain" id="PRO_1000144280" description="Large ribosomal subunit protein uL14">
    <location>
        <begin position="1"/>
        <end position="122"/>
    </location>
</feature>
<accession>B0TC66</accession>
<gene>
    <name evidence="1" type="primary">rplN</name>
    <name type="ordered locus">Helmi_13400</name>
    <name type="ORF">HM1_1388</name>
</gene>
<name>RL14_HELMI</name>
<keyword id="KW-1185">Reference proteome</keyword>
<keyword id="KW-0687">Ribonucleoprotein</keyword>
<keyword id="KW-0689">Ribosomal protein</keyword>
<keyword id="KW-0694">RNA-binding</keyword>
<keyword id="KW-0699">rRNA-binding</keyword>